<reference key="1">
    <citation type="submission" date="2006-12" db="EMBL/GenBank/DDBJ databases">
        <title>Complete sequence of Acidovorax avenae subsp. citrulli AAC00-1.</title>
        <authorList>
            <person name="Copeland A."/>
            <person name="Lucas S."/>
            <person name="Lapidus A."/>
            <person name="Barry K."/>
            <person name="Detter J.C."/>
            <person name="Glavina del Rio T."/>
            <person name="Dalin E."/>
            <person name="Tice H."/>
            <person name="Pitluck S."/>
            <person name="Kiss H."/>
            <person name="Brettin T."/>
            <person name="Bruce D."/>
            <person name="Han C."/>
            <person name="Tapia R."/>
            <person name="Gilna P."/>
            <person name="Schmutz J."/>
            <person name="Larimer F."/>
            <person name="Land M."/>
            <person name="Hauser L."/>
            <person name="Kyrpides N."/>
            <person name="Kim E."/>
            <person name="Stahl D."/>
            <person name="Richardson P."/>
        </authorList>
    </citation>
    <scope>NUCLEOTIDE SEQUENCE [LARGE SCALE GENOMIC DNA]</scope>
    <source>
        <strain>AAC00-1</strain>
    </source>
</reference>
<dbReference type="EC" id="2.7.7.6" evidence="1"/>
<dbReference type="EMBL" id="CP000512">
    <property type="protein sequence ID" value="ABM35067.1"/>
    <property type="molecule type" value="Genomic_DNA"/>
</dbReference>
<dbReference type="RefSeq" id="WP_011797536.1">
    <property type="nucleotide sequence ID" value="NC_008752.1"/>
</dbReference>
<dbReference type="SMR" id="A1TVS9"/>
<dbReference type="STRING" id="397945.Aave_4530"/>
<dbReference type="GeneID" id="79789509"/>
<dbReference type="KEGG" id="aav:Aave_4530"/>
<dbReference type="eggNOG" id="COG0086">
    <property type="taxonomic scope" value="Bacteria"/>
</dbReference>
<dbReference type="HOGENOM" id="CLU_000524_3_1_4"/>
<dbReference type="OrthoDB" id="9815296at2"/>
<dbReference type="Proteomes" id="UP000002596">
    <property type="component" value="Chromosome"/>
</dbReference>
<dbReference type="GO" id="GO:0000428">
    <property type="term" value="C:DNA-directed RNA polymerase complex"/>
    <property type="evidence" value="ECO:0007669"/>
    <property type="project" value="UniProtKB-KW"/>
</dbReference>
<dbReference type="GO" id="GO:0003677">
    <property type="term" value="F:DNA binding"/>
    <property type="evidence" value="ECO:0007669"/>
    <property type="project" value="UniProtKB-UniRule"/>
</dbReference>
<dbReference type="GO" id="GO:0003899">
    <property type="term" value="F:DNA-directed RNA polymerase activity"/>
    <property type="evidence" value="ECO:0007669"/>
    <property type="project" value="UniProtKB-UniRule"/>
</dbReference>
<dbReference type="GO" id="GO:0000287">
    <property type="term" value="F:magnesium ion binding"/>
    <property type="evidence" value="ECO:0007669"/>
    <property type="project" value="UniProtKB-UniRule"/>
</dbReference>
<dbReference type="GO" id="GO:0008270">
    <property type="term" value="F:zinc ion binding"/>
    <property type="evidence" value="ECO:0007669"/>
    <property type="project" value="UniProtKB-UniRule"/>
</dbReference>
<dbReference type="GO" id="GO:0006351">
    <property type="term" value="P:DNA-templated transcription"/>
    <property type="evidence" value="ECO:0007669"/>
    <property type="project" value="UniProtKB-UniRule"/>
</dbReference>
<dbReference type="CDD" id="cd02655">
    <property type="entry name" value="RNAP_beta'_C"/>
    <property type="match status" value="1"/>
</dbReference>
<dbReference type="CDD" id="cd01609">
    <property type="entry name" value="RNAP_beta'_N"/>
    <property type="match status" value="1"/>
</dbReference>
<dbReference type="FunFam" id="1.10.132.30:FF:000003">
    <property type="entry name" value="DNA-directed RNA polymerase subunit beta"/>
    <property type="match status" value="1"/>
</dbReference>
<dbReference type="FunFam" id="1.10.150.390:FF:000002">
    <property type="entry name" value="DNA-directed RNA polymerase subunit beta"/>
    <property type="match status" value="1"/>
</dbReference>
<dbReference type="FunFam" id="4.10.860.120:FF:000001">
    <property type="entry name" value="DNA-directed RNA polymerase subunit beta"/>
    <property type="match status" value="1"/>
</dbReference>
<dbReference type="Gene3D" id="1.10.132.30">
    <property type="match status" value="1"/>
</dbReference>
<dbReference type="Gene3D" id="1.10.150.390">
    <property type="match status" value="1"/>
</dbReference>
<dbReference type="Gene3D" id="1.10.1790.20">
    <property type="match status" value="1"/>
</dbReference>
<dbReference type="Gene3D" id="1.10.40.90">
    <property type="match status" value="1"/>
</dbReference>
<dbReference type="Gene3D" id="2.40.40.20">
    <property type="match status" value="1"/>
</dbReference>
<dbReference type="Gene3D" id="2.40.50.100">
    <property type="match status" value="3"/>
</dbReference>
<dbReference type="Gene3D" id="4.10.860.120">
    <property type="entry name" value="RNA polymerase II, clamp domain"/>
    <property type="match status" value="1"/>
</dbReference>
<dbReference type="Gene3D" id="1.10.274.100">
    <property type="entry name" value="RNA polymerase Rpb1, domain 3"/>
    <property type="match status" value="1"/>
</dbReference>
<dbReference type="HAMAP" id="MF_01322">
    <property type="entry name" value="RNApol_bact_RpoC"/>
    <property type="match status" value="1"/>
</dbReference>
<dbReference type="InterPro" id="IPR045867">
    <property type="entry name" value="DNA-dir_RpoC_beta_prime"/>
</dbReference>
<dbReference type="InterPro" id="IPR012754">
    <property type="entry name" value="DNA-dir_RpoC_beta_prime_bact"/>
</dbReference>
<dbReference type="InterPro" id="IPR000722">
    <property type="entry name" value="RNA_pol_asu"/>
</dbReference>
<dbReference type="InterPro" id="IPR006592">
    <property type="entry name" value="RNA_pol_N"/>
</dbReference>
<dbReference type="InterPro" id="IPR007080">
    <property type="entry name" value="RNA_pol_Rpb1_1"/>
</dbReference>
<dbReference type="InterPro" id="IPR007066">
    <property type="entry name" value="RNA_pol_Rpb1_3"/>
</dbReference>
<dbReference type="InterPro" id="IPR042102">
    <property type="entry name" value="RNA_pol_Rpb1_3_sf"/>
</dbReference>
<dbReference type="InterPro" id="IPR007083">
    <property type="entry name" value="RNA_pol_Rpb1_4"/>
</dbReference>
<dbReference type="InterPro" id="IPR007081">
    <property type="entry name" value="RNA_pol_Rpb1_5"/>
</dbReference>
<dbReference type="InterPro" id="IPR044893">
    <property type="entry name" value="RNA_pol_Rpb1_clamp_domain"/>
</dbReference>
<dbReference type="InterPro" id="IPR038120">
    <property type="entry name" value="Rpb1_funnel_sf"/>
</dbReference>
<dbReference type="NCBIfam" id="TIGR02386">
    <property type="entry name" value="rpoC_TIGR"/>
    <property type="match status" value="1"/>
</dbReference>
<dbReference type="PANTHER" id="PTHR19376">
    <property type="entry name" value="DNA-DIRECTED RNA POLYMERASE"/>
    <property type="match status" value="1"/>
</dbReference>
<dbReference type="PANTHER" id="PTHR19376:SF54">
    <property type="entry name" value="DNA-DIRECTED RNA POLYMERASE SUBUNIT BETA"/>
    <property type="match status" value="1"/>
</dbReference>
<dbReference type="Pfam" id="PF04997">
    <property type="entry name" value="RNA_pol_Rpb1_1"/>
    <property type="match status" value="1"/>
</dbReference>
<dbReference type="Pfam" id="PF00623">
    <property type="entry name" value="RNA_pol_Rpb1_2"/>
    <property type="match status" value="2"/>
</dbReference>
<dbReference type="Pfam" id="PF04983">
    <property type="entry name" value="RNA_pol_Rpb1_3"/>
    <property type="match status" value="1"/>
</dbReference>
<dbReference type="Pfam" id="PF05000">
    <property type="entry name" value="RNA_pol_Rpb1_4"/>
    <property type="match status" value="1"/>
</dbReference>
<dbReference type="Pfam" id="PF04998">
    <property type="entry name" value="RNA_pol_Rpb1_5"/>
    <property type="match status" value="1"/>
</dbReference>
<dbReference type="SMART" id="SM00663">
    <property type="entry name" value="RPOLA_N"/>
    <property type="match status" value="1"/>
</dbReference>
<dbReference type="SUPFAM" id="SSF64484">
    <property type="entry name" value="beta and beta-prime subunits of DNA dependent RNA-polymerase"/>
    <property type="match status" value="1"/>
</dbReference>
<keyword id="KW-0240">DNA-directed RNA polymerase</keyword>
<keyword id="KW-0460">Magnesium</keyword>
<keyword id="KW-0479">Metal-binding</keyword>
<keyword id="KW-0548">Nucleotidyltransferase</keyword>
<keyword id="KW-0804">Transcription</keyword>
<keyword id="KW-0808">Transferase</keyword>
<keyword id="KW-0862">Zinc</keyword>
<comment type="function">
    <text evidence="1">DNA-dependent RNA polymerase catalyzes the transcription of DNA into RNA using the four ribonucleoside triphosphates as substrates.</text>
</comment>
<comment type="catalytic activity">
    <reaction evidence="1">
        <text>RNA(n) + a ribonucleoside 5'-triphosphate = RNA(n+1) + diphosphate</text>
        <dbReference type="Rhea" id="RHEA:21248"/>
        <dbReference type="Rhea" id="RHEA-COMP:14527"/>
        <dbReference type="Rhea" id="RHEA-COMP:17342"/>
        <dbReference type="ChEBI" id="CHEBI:33019"/>
        <dbReference type="ChEBI" id="CHEBI:61557"/>
        <dbReference type="ChEBI" id="CHEBI:140395"/>
        <dbReference type="EC" id="2.7.7.6"/>
    </reaction>
</comment>
<comment type="cofactor">
    <cofactor evidence="1">
        <name>Mg(2+)</name>
        <dbReference type="ChEBI" id="CHEBI:18420"/>
    </cofactor>
    <text evidence="1">Binds 1 Mg(2+) ion per subunit.</text>
</comment>
<comment type="cofactor">
    <cofactor evidence="1">
        <name>Zn(2+)</name>
        <dbReference type="ChEBI" id="CHEBI:29105"/>
    </cofactor>
    <text evidence="1">Binds 2 Zn(2+) ions per subunit.</text>
</comment>
<comment type="subunit">
    <text evidence="1">The RNAP catalytic core consists of 2 alpha, 1 beta, 1 beta' and 1 omega subunit. When a sigma factor is associated with the core the holoenzyme is formed, which can initiate transcription.</text>
</comment>
<comment type="similarity">
    <text evidence="1">Belongs to the RNA polymerase beta' chain family.</text>
</comment>
<gene>
    <name evidence="1" type="primary">rpoC</name>
    <name type="ordered locus">Aave_4530</name>
</gene>
<protein>
    <recommendedName>
        <fullName evidence="1">DNA-directed RNA polymerase subunit beta'</fullName>
        <shortName evidence="1">RNAP subunit beta'</shortName>
        <ecNumber evidence="1">2.7.7.6</ecNumber>
    </recommendedName>
    <alternativeName>
        <fullName evidence="1">RNA polymerase subunit beta'</fullName>
    </alternativeName>
    <alternativeName>
        <fullName evidence="1">Transcriptase subunit beta'</fullName>
    </alternativeName>
</protein>
<proteinExistence type="inferred from homology"/>
<feature type="chain" id="PRO_0000308814" description="DNA-directed RNA polymerase subunit beta'">
    <location>
        <begin position="1"/>
        <end position="1411"/>
    </location>
</feature>
<feature type="region of interest" description="Disordered" evidence="2">
    <location>
        <begin position="1384"/>
        <end position="1411"/>
    </location>
</feature>
<feature type="binding site" evidence="1">
    <location>
        <position position="70"/>
    </location>
    <ligand>
        <name>Zn(2+)</name>
        <dbReference type="ChEBI" id="CHEBI:29105"/>
        <label>1</label>
    </ligand>
</feature>
<feature type="binding site" evidence="1">
    <location>
        <position position="72"/>
    </location>
    <ligand>
        <name>Zn(2+)</name>
        <dbReference type="ChEBI" id="CHEBI:29105"/>
        <label>1</label>
    </ligand>
</feature>
<feature type="binding site" evidence="1">
    <location>
        <position position="85"/>
    </location>
    <ligand>
        <name>Zn(2+)</name>
        <dbReference type="ChEBI" id="CHEBI:29105"/>
        <label>1</label>
    </ligand>
</feature>
<feature type="binding site" evidence="1">
    <location>
        <position position="88"/>
    </location>
    <ligand>
        <name>Zn(2+)</name>
        <dbReference type="ChEBI" id="CHEBI:29105"/>
        <label>1</label>
    </ligand>
</feature>
<feature type="binding site" evidence="1">
    <location>
        <position position="458"/>
    </location>
    <ligand>
        <name>Mg(2+)</name>
        <dbReference type="ChEBI" id="CHEBI:18420"/>
    </ligand>
</feature>
<feature type="binding site" evidence="1">
    <location>
        <position position="460"/>
    </location>
    <ligand>
        <name>Mg(2+)</name>
        <dbReference type="ChEBI" id="CHEBI:18420"/>
    </ligand>
</feature>
<feature type="binding site" evidence="1">
    <location>
        <position position="462"/>
    </location>
    <ligand>
        <name>Mg(2+)</name>
        <dbReference type="ChEBI" id="CHEBI:18420"/>
    </ligand>
</feature>
<feature type="binding site" evidence="1">
    <location>
        <position position="813"/>
    </location>
    <ligand>
        <name>Zn(2+)</name>
        <dbReference type="ChEBI" id="CHEBI:29105"/>
        <label>2</label>
    </ligand>
</feature>
<feature type="binding site" evidence="1">
    <location>
        <position position="887"/>
    </location>
    <ligand>
        <name>Zn(2+)</name>
        <dbReference type="ChEBI" id="CHEBI:29105"/>
        <label>2</label>
    </ligand>
</feature>
<feature type="binding site" evidence="1">
    <location>
        <position position="894"/>
    </location>
    <ligand>
        <name>Zn(2+)</name>
        <dbReference type="ChEBI" id="CHEBI:29105"/>
        <label>2</label>
    </ligand>
</feature>
<feature type="binding site" evidence="1">
    <location>
        <position position="897"/>
    </location>
    <ligand>
        <name>Zn(2+)</name>
        <dbReference type="ChEBI" id="CHEBI:29105"/>
        <label>2</label>
    </ligand>
</feature>
<evidence type="ECO:0000255" key="1">
    <source>
        <dbReference type="HAMAP-Rule" id="MF_01322"/>
    </source>
</evidence>
<evidence type="ECO:0000256" key="2">
    <source>
        <dbReference type="SAM" id="MobiDB-lite"/>
    </source>
</evidence>
<sequence length="1411" mass="154758">MKSLLDLFKQFTPDEHFDAIRIGMASPEKIRSWSFGEVKKPETINYRTFKPERDGLFCAKIFGPIKDYECLCGKYKRLKHRGVICEKCGVEVTQTKVRRERMGHIDLAAPCAHIWFLKSLPSRLGLVLDMTLRDIERVLYFEAYVVTDPGMTPLKKFGIMSEDDHDAKRKEYGDEFIAKMGAEGIKDLLEGIDIDLEIEKLRGDLTGSEVKVKKNAKRLKVLEAFKKSGIKPEWMVLDVLPVLPPDLRPLVPLDGGRFATSDLNDLYRRVINRNSRLRRLLELKAPEIIARNEKRMLQEAVDSLLDNGRRGKAMTGANKRALKSLADMIKGKSGRFRQNLLGKRVDYSGRSVITVGPTLKLHQCGLPKLMALELFKPFIFSRLEQMGIATTIKAAKKEVESGTPVVWDILEEVIKEHPVMLNRAPTLHRLGIQAFEPILIEGKAIQLHPLVCAAFNADFDGDQMAVHVPLSVEAQMEARTLMLASNNVLFPASGEPSIVPSQDVVLGLYHATRDKINGKGEGLVFADTGEVQRALDAGQVELHAKISVRLTEWTKDKASGEFVPSTSLVDTTVGRALLSEILPKGLPFSNINKALKKKEISKLINVSFRKCGLKETVVFADKLLQNGFRLATRAGFSVAIDDMLVPPQKTEILARAEAEVKEIEQQYVSGLVTAGERYNKVVDIWGKAGDDVSKVMMDQLKVEKTTDRHGKEVNQESFNAIYMMADSGARGSAAQIRQLAGMRGLMAKPDGSIIETPITANFREGLNVLQYFISTHGARKGLADTALKTANSGYLTRRLVDVTQDLVVTEEDCGTTNGSVMRAIVEGGEVIESLRERVLGRSTAEEVLHPETRAVLVPAGQMLDEDTLEELEAAGVDEVKVRTALTCETRYGLCAKCYGRDLGRGGLINLGEAVGVIAAQSIGEPGTQLTMRTFHIGGAASRAAIASTVEAKSNGVIGFNATMRYVTNSKGELVVIARSGEVIIQDEHGRERERHKVPYGATLTVKADQQVKAGTILANWDPLTRPIITEFAGQVKFENIEEGLTVAKQVDDVTGLSTLVVIDPKRRGSAKVVRPQVKLVDANGAEVKIPGTDHSVTIGFQVGALIQVRDGQDVGPGEVLARIPVEGQKTRDITGGLPRVAELFEARSPKDKGMLAEITGTVSFGKETKGKVRLQITDPDGKVWDELVPKEKNVLVHEGQVVNKGELIVDGPADPQDILRLLGIEELSRYIVDEVQDVYRLQGVKINDKHIEVIVRQMLRRVVVENPGESGYIAGEQVERSEILNTNEQLQSEGKIPATYSNVLLGITKASLSTDSFISAASFQETTRVLTEAAIMGKRDELRGLKENVIVGRLIPAGTGLAYHQARKAKEAMDDAERRAIAEAEAAEMATTGSDEAPEVEGSGVESGSAE</sequence>
<accession>A1TVS9</accession>
<organism>
    <name type="scientific">Paracidovorax citrulli (strain AAC00-1)</name>
    <name type="common">Acidovorax citrulli</name>
    <dbReference type="NCBI Taxonomy" id="397945"/>
    <lineage>
        <taxon>Bacteria</taxon>
        <taxon>Pseudomonadati</taxon>
        <taxon>Pseudomonadota</taxon>
        <taxon>Betaproteobacteria</taxon>
        <taxon>Burkholderiales</taxon>
        <taxon>Comamonadaceae</taxon>
        <taxon>Paracidovorax</taxon>
    </lineage>
</organism>
<name>RPOC_PARC0</name>